<reference key="1">
    <citation type="journal article" date="2007" name="PLoS ONE">
        <title>Analysis of the neurotoxin complex genes in Clostridium botulinum A1-A4 and B1 strains: BoNT/A3, /Ba4 and /B1 clusters are located within plasmids.</title>
        <authorList>
            <person name="Smith T.J."/>
            <person name="Hill K.K."/>
            <person name="Foley B.T."/>
            <person name="Detter J.C."/>
            <person name="Munk A.C."/>
            <person name="Bruce D.C."/>
            <person name="Doggett N.A."/>
            <person name="Smith L.A."/>
            <person name="Marks J.D."/>
            <person name="Xie G."/>
            <person name="Brettin T.S."/>
        </authorList>
    </citation>
    <scope>NUCLEOTIDE SEQUENCE [LARGE SCALE GENOMIC DNA]</scope>
    <source>
        <strain>ATCC 19397 / Type A</strain>
    </source>
</reference>
<keyword id="KW-0067">ATP-binding</keyword>
<keyword id="KW-0963">Cytoplasm</keyword>
<keyword id="KW-0227">DNA damage</keyword>
<keyword id="KW-0234">DNA repair</keyword>
<keyword id="KW-0235">DNA replication</keyword>
<keyword id="KW-0238">DNA-binding</keyword>
<keyword id="KW-0547">Nucleotide-binding</keyword>
<keyword id="KW-0742">SOS response</keyword>
<feature type="chain" id="PRO_1000048510" description="DNA replication and repair protein RecF">
    <location>
        <begin position="1"/>
        <end position="364"/>
    </location>
</feature>
<feature type="binding site" evidence="1">
    <location>
        <begin position="30"/>
        <end position="37"/>
    </location>
    <ligand>
        <name>ATP</name>
        <dbReference type="ChEBI" id="CHEBI:30616"/>
    </ligand>
</feature>
<accession>A7FPF3</accession>
<sequence length="364" mass="42641">MYIKNVHLINFRNYDDMYLELSPNTNIFVGNNAQGKTNILESIYYSSIGKSHRTNKDKDLIKWDKNNTYLRTYVSRERLDKTIDINIFKNGKKAITVNKIKIKKISELMGNLNVVMFSPEDLRIIKDSPGNRRKFLDIELCKINNVYYHDLVQYNKILSERNTALKNWNNKINDIIDIYDEQLSKYGAFIIKERNKYLDKLNIIGKNIHKKITNDLEDINFRYLTNIKDFDNAEKELLIVLKKNRKKDLERNSTSIGPHRDDFEVSINNIDTRIFGSQGQQRTAVLTLKFASLEIIKNIIGEYPVLLLDDVLSELDSNRQKFVLNSIDKIQTIITCTGIEEIDKYLDKKQSQLYLVNNGKIKRV</sequence>
<organism>
    <name type="scientific">Clostridium botulinum (strain ATCC 19397 / Type A)</name>
    <dbReference type="NCBI Taxonomy" id="441770"/>
    <lineage>
        <taxon>Bacteria</taxon>
        <taxon>Bacillati</taxon>
        <taxon>Bacillota</taxon>
        <taxon>Clostridia</taxon>
        <taxon>Eubacteriales</taxon>
        <taxon>Clostridiaceae</taxon>
        <taxon>Clostridium</taxon>
    </lineage>
</organism>
<dbReference type="EMBL" id="CP000726">
    <property type="protein sequence ID" value="ABS35411.1"/>
    <property type="molecule type" value="Genomic_DNA"/>
</dbReference>
<dbReference type="RefSeq" id="WP_003359456.1">
    <property type="nucleotide sequence ID" value="NC_009697.1"/>
</dbReference>
<dbReference type="SMR" id="A7FPF3"/>
<dbReference type="GeneID" id="5184259"/>
<dbReference type="KEGG" id="cba:CLB_0004"/>
<dbReference type="HOGENOM" id="CLU_040267_0_1_9"/>
<dbReference type="GO" id="GO:0005737">
    <property type="term" value="C:cytoplasm"/>
    <property type="evidence" value="ECO:0007669"/>
    <property type="project" value="UniProtKB-SubCell"/>
</dbReference>
<dbReference type="GO" id="GO:0005524">
    <property type="term" value="F:ATP binding"/>
    <property type="evidence" value="ECO:0007669"/>
    <property type="project" value="UniProtKB-UniRule"/>
</dbReference>
<dbReference type="GO" id="GO:0003697">
    <property type="term" value="F:single-stranded DNA binding"/>
    <property type="evidence" value="ECO:0007669"/>
    <property type="project" value="UniProtKB-UniRule"/>
</dbReference>
<dbReference type="GO" id="GO:0006260">
    <property type="term" value="P:DNA replication"/>
    <property type="evidence" value="ECO:0007669"/>
    <property type="project" value="UniProtKB-UniRule"/>
</dbReference>
<dbReference type="GO" id="GO:0000731">
    <property type="term" value="P:DNA synthesis involved in DNA repair"/>
    <property type="evidence" value="ECO:0007669"/>
    <property type="project" value="TreeGrafter"/>
</dbReference>
<dbReference type="GO" id="GO:0006302">
    <property type="term" value="P:double-strand break repair"/>
    <property type="evidence" value="ECO:0007669"/>
    <property type="project" value="TreeGrafter"/>
</dbReference>
<dbReference type="GO" id="GO:0009432">
    <property type="term" value="P:SOS response"/>
    <property type="evidence" value="ECO:0007669"/>
    <property type="project" value="UniProtKB-UniRule"/>
</dbReference>
<dbReference type="CDD" id="cd03242">
    <property type="entry name" value="ABC_RecF"/>
    <property type="match status" value="1"/>
</dbReference>
<dbReference type="Gene3D" id="3.40.50.300">
    <property type="entry name" value="P-loop containing nucleotide triphosphate hydrolases"/>
    <property type="match status" value="1"/>
</dbReference>
<dbReference type="Gene3D" id="1.20.1050.90">
    <property type="entry name" value="RecF/RecN/SMC, N-terminal domain"/>
    <property type="match status" value="1"/>
</dbReference>
<dbReference type="HAMAP" id="MF_00365">
    <property type="entry name" value="RecF"/>
    <property type="match status" value="1"/>
</dbReference>
<dbReference type="InterPro" id="IPR001238">
    <property type="entry name" value="DNA-binding_RecF"/>
</dbReference>
<dbReference type="InterPro" id="IPR018078">
    <property type="entry name" value="DNA-binding_RecF_CS"/>
</dbReference>
<dbReference type="InterPro" id="IPR027417">
    <property type="entry name" value="P-loop_NTPase"/>
</dbReference>
<dbReference type="InterPro" id="IPR003395">
    <property type="entry name" value="RecF/RecN/SMC_N"/>
</dbReference>
<dbReference type="InterPro" id="IPR042174">
    <property type="entry name" value="RecF_2"/>
</dbReference>
<dbReference type="NCBIfam" id="TIGR00611">
    <property type="entry name" value="recf"/>
    <property type="match status" value="1"/>
</dbReference>
<dbReference type="PANTHER" id="PTHR32182">
    <property type="entry name" value="DNA REPLICATION AND REPAIR PROTEIN RECF"/>
    <property type="match status" value="1"/>
</dbReference>
<dbReference type="PANTHER" id="PTHR32182:SF0">
    <property type="entry name" value="DNA REPLICATION AND REPAIR PROTEIN RECF"/>
    <property type="match status" value="1"/>
</dbReference>
<dbReference type="Pfam" id="PF02463">
    <property type="entry name" value="SMC_N"/>
    <property type="match status" value="1"/>
</dbReference>
<dbReference type="SUPFAM" id="SSF52540">
    <property type="entry name" value="P-loop containing nucleoside triphosphate hydrolases"/>
    <property type="match status" value="1"/>
</dbReference>
<dbReference type="PROSITE" id="PS00617">
    <property type="entry name" value="RECF_1"/>
    <property type="match status" value="1"/>
</dbReference>
<dbReference type="PROSITE" id="PS00618">
    <property type="entry name" value="RECF_2"/>
    <property type="match status" value="1"/>
</dbReference>
<name>RECF_CLOB1</name>
<gene>
    <name evidence="1" type="primary">recF</name>
    <name type="ordered locus">CLB_0004</name>
</gene>
<protein>
    <recommendedName>
        <fullName evidence="1">DNA replication and repair protein RecF</fullName>
    </recommendedName>
</protein>
<comment type="function">
    <text evidence="1">The RecF protein is involved in DNA metabolism; it is required for DNA replication and normal SOS inducibility. RecF binds preferentially to single-stranded, linear DNA. It also seems to bind ATP.</text>
</comment>
<comment type="subcellular location">
    <subcellularLocation>
        <location evidence="1">Cytoplasm</location>
    </subcellularLocation>
</comment>
<comment type="similarity">
    <text evidence="1">Belongs to the RecF family.</text>
</comment>
<proteinExistence type="inferred from homology"/>
<evidence type="ECO:0000255" key="1">
    <source>
        <dbReference type="HAMAP-Rule" id="MF_00365"/>
    </source>
</evidence>